<keyword id="KW-0963">Cytoplasm</keyword>
<keyword id="KW-0227">DNA damage</keyword>
<keyword id="KW-0234">DNA repair</keyword>
<keyword id="KW-0378">Hydrolase</keyword>
<organism>
    <name type="scientific">Lactobacillus helveticus (strain DPC 4571)</name>
    <dbReference type="NCBI Taxonomy" id="405566"/>
    <lineage>
        <taxon>Bacteria</taxon>
        <taxon>Bacillati</taxon>
        <taxon>Bacillota</taxon>
        <taxon>Bacilli</taxon>
        <taxon>Lactobacillales</taxon>
        <taxon>Lactobacillaceae</taxon>
        <taxon>Lactobacillus</taxon>
    </lineage>
</organism>
<reference key="1">
    <citation type="journal article" date="2008" name="J. Bacteriol.">
        <title>Genome sequence of Lactobacillus helveticus: an organism distinguished by selective gene loss and IS element expansion.</title>
        <authorList>
            <person name="Callanan M."/>
            <person name="Kaleta P."/>
            <person name="O'Callaghan J."/>
            <person name="O'Sullivan O."/>
            <person name="Jordan K."/>
            <person name="McAuliffe O."/>
            <person name="Sangrador-Vegas A."/>
            <person name="Slattery L."/>
            <person name="Fitzgerald G.F."/>
            <person name="Beresford T."/>
            <person name="Ross R.P."/>
        </authorList>
    </citation>
    <scope>NUCLEOTIDE SEQUENCE [LARGE SCALE GENOMIC DNA]</scope>
    <source>
        <strain>DPC 4571</strain>
    </source>
</reference>
<name>UNG_LACH4</name>
<protein>
    <recommendedName>
        <fullName evidence="1">Uracil-DNA glycosylase</fullName>
        <shortName evidence="1">UDG</shortName>
        <ecNumber evidence="1">3.2.2.27</ecNumber>
    </recommendedName>
</protein>
<comment type="function">
    <text evidence="1">Excises uracil residues from the DNA which can arise as a result of misincorporation of dUMP residues by DNA polymerase or due to deamination of cytosine.</text>
</comment>
<comment type="catalytic activity">
    <reaction evidence="1">
        <text>Hydrolyzes single-stranded DNA or mismatched double-stranded DNA and polynucleotides, releasing free uracil.</text>
        <dbReference type="EC" id="3.2.2.27"/>
    </reaction>
</comment>
<comment type="subcellular location">
    <subcellularLocation>
        <location evidence="1">Cytoplasm</location>
    </subcellularLocation>
</comment>
<comment type="similarity">
    <text evidence="1">Belongs to the uracil-DNA glycosylase (UDG) superfamily. UNG family.</text>
</comment>
<sequence>MAKELIGNDWDKVLDPVFASDKYHELHNFLKEEYSNKRIFPDMYHIFTAFKLTPFNKTKVVILGQDPYHNPGQANGMSFSVMPGTPLPPSLRNIYKELYDDVGVRPVNHGYLKKWADQGVLLLNAVLTVPYAHANGHQGKGWEDVTDTAIKALSERGKVVFILWGRFAQNKIPLIDQSKNFIIKSSHPSPFSADRGFFGSRPFSRCNTALLNFGETPIDWQLSETVNKSDLA</sequence>
<accession>A8YUE7</accession>
<gene>
    <name evidence="1" type="primary">ung</name>
    <name type="ordered locus">lhv_0748</name>
</gene>
<evidence type="ECO:0000255" key="1">
    <source>
        <dbReference type="HAMAP-Rule" id="MF_00148"/>
    </source>
</evidence>
<feature type="chain" id="PRO_1000071499" description="Uracil-DNA glycosylase">
    <location>
        <begin position="1"/>
        <end position="232"/>
    </location>
</feature>
<feature type="active site" description="Proton acceptor" evidence="1">
    <location>
        <position position="66"/>
    </location>
</feature>
<proteinExistence type="inferred from homology"/>
<dbReference type="EC" id="3.2.2.27" evidence="1"/>
<dbReference type="EMBL" id="CP000517">
    <property type="protein sequence ID" value="ABX26885.1"/>
    <property type="molecule type" value="Genomic_DNA"/>
</dbReference>
<dbReference type="RefSeq" id="WP_012211633.1">
    <property type="nucleotide sequence ID" value="NC_010080.1"/>
</dbReference>
<dbReference type="SMR" id="A8YUE7"/>
<dbReference type="KEGG" id="lhe:lhv_0748"/>
<dbReference type="eggNOG" id="COG0692">
    <property type="taxonomic scope" value="Bacteria"/>
</dbReference>
<dbReference type="HOGENOM" id="CLU_032162_3_0_9"/>
<dbReference type="Proteomes" id="UP000000790">
    <property type="component" value="Chromosome"/>
</dbReference>
<dbReference type="GO" id="GO:0005737">
    <property type="term" value="C:cytoplasm"/>
    <property type="evidence" value="ECO:0007669"/>
    <property type="project" value="UniProtKB-SubCell"/>
</dbReference>
<dbReference type="GO" id="GO:0004844">
    <property type="term" value="F:uracil DNA N-glycosylase activity"/>
    <property type="evidence" value="ECO:0007669"/>
    <property type="project" value="UniProtKB-UniRule"/>
</dbReference>
<dbReference type="GO" id="GO:0097510">
    <property type="term" value="P:base-excision repair, AP site formation via deaminated base removal"/>
    <property type="evidence" value="ECO:0007669"/>
    <property type="project" value="TreeGrafter"/>
</dbReference>
<dbReference type="CDD" id="cd10027">
    <property type="entry name" value="UDG-F1-like"/>
    <property type="match status" value="1"/>
</dbReference>
<dbReference type="FunFam" id="3.40.470.10:FF:000001">
    <property type="entry name" value="Uracil-DNA glycosylase"/>
    <property type="match status" value="1"/>
</dbReference>
<dbReference type="Gene3D" id="3.40.470.10">
    <property type="entry name" value="Uracil-DNA glycosylase-like domain"/>
    <property type="match status" value="1"/>
</dbReference>
<dbReference type="HAMAP" id="MF_00148">
    <property type="entry name" value="UDG"/>
    <property type="match status" value="1"/>
</dbReference>
<dbReference type="InterPro" id="IPR002043">
    <property type="entry name" value="UDG_fam1"/>
</dbReference>
<dbReference type="InterPro" id="IPR018085">
    <property type="entry name" value="Ura-DNA_Glyclase_AS"/>
</dbReference>
<dbReference type="InterPro" id="IPR005122">
    <property type="entry name" value="Uracil-DNA_glycosylase-like"/>
</dbReference>
<dbReference type="InterPro" id="IPR036895">
    <property type="entry name" value="Uracil-DNA_glycosylase-like_sf"/>
</dbReference>
<dbReference type="NCBIfam" id="NF003588">
    <property type="entry name" value="PRK05254.1-1"/>
    <property type="match status" value="1"/>
</dbReference>
<dbReference type="NCBIfam" id="NF003589">
    <property type="entry name" value="PRK05254.1-2"/>
    <property type="match status" value="1"/>
</dbReference>
<dbReference type="NCBIfam" id="NF003592">
    <property type="entry name" value="PRK05254.1-5"/>
    <property type="match status" value="1"/>
</dbReference>
<dbReference type="NCBIfam" id="TIGR00628">
    <property type="entry name" value="ung"/>
    <property type="match status" value="1"/>
</dbReference>
<dbReference type="PANTHER" id="PTHR11264">
    <property type="entry name" value="URACIL-DNA GLYCOSYLASE"/>
    <property type="match status" value="1"/>
</dbReference>
<dbReference type="PANTHER" id="PTHR11264:SF0">
    <property type="entry name" value="URACIL-DNA GLYCOSYLASE"/>
    <property type="match status" value="1"/>
</dbReference>
<dbReference type="Pfam" id="PF03167">
    <property type="entry name" value="UDG"/>
    <property type="match status" value="1"/>
</dbReference>
<dbReference type="SMART" id="SM00986">
    <property type="entry name" value="UDG"/>
    <property type="match status" value="1"/>
</dbReference>
<dbReference type="SMART" id="SM00987">
    <property type="entry name" value="UreE_C"/>
    <property type="match status" value="1"/>
</dbReference>
<dbReference type="SUPFAM" id="SSF52141">
    <property type="entry name" value="Uracil-DNA glycosylase-like"/>
    <property type="match status" value="1"/>
</dbReference>
<dbReference type="PROSITE" id="PS00130">
    <property type="entry name" value="U_DNA_GLYCOSYLASE"/>
    <property type="match status" value="1"/>
</dbReference>